<organism>
    <name type="scientific">Dehalococcoides mccartyi (strain CBDB1)</name>
    <dbReference type="NCBI Taxonomy" id="255470"/>
    <lineage>
        <taxon>Bacteria</taxon>
        <taxon>Bacillati</taxon>
        <taxon>Chloroflexota</taxon>
        <taxon>Dehalococcoidia</taxon>
        <taxon>Dehalococcoidales</taxon>
        <taxon>Dehalococcoidaceae</taxon>
        <taxon>Dehalococcoides</taxon>
    </lineage>
</organism>
<comment type="function">
    <text evidence="1">Fluoride-specific ion channel. Important for reducing fluoride concentration in the cell, thus reducing its toxicity.</text>
</comment>
<comment type="catalytic activity">
    <reaction evidence="1">
        <text>fluoride(in) = fluoride(out)</text>
        <dbReference type="Rhea" id="RHEA:76159"/>
        <dbReference type="ChEBI" id="CHEBI:17051"/>
    </reaction>
    <physiologicalReaction direction="left-to-right" evidence="1">
        <dbReference type="Rhea" id="RHEA:76160"/>
    </physiologicalReaction>
</comment>
<comment type="activity regulation">
    <text evidence="1">Na(+) is not transported, but it plays an essential structural role and its presence is essential for fluoride channel function.</text>
</comment>
<comment type="subcellular location">
    <subcellularLocation>
        <location evidence="1">Cell membrane</location>
        <topology evidence="1">Multi-pass membrane protein</topology>
    </subcellularLocation>
</comment>
<comment type="similarity">
    <text evidence="1">Belongs to the fluoride channel Fluc/FEX (TC 1.A.43) family.</text>
</comment>
<name>FLUC_DEHMC</name>
<protein>
    <recommendedName>
        <fullName evidence="1">Fluoride-specific ion channel FluC</fullName>
    </recommendedName>
</protein>
<proteinExistence type="inferred from homology"/>
<accession>Q3ZZ39</accession>
<keyword id="KW-1003">Cell membrane</keyword>
<keyword id="KW-0407">Ion channel</keyword>
<keyword id="KW-0406">Ion transport</keyword>
<keyword id="KW-0472">Membrane</keyword>
<keyword id="KW-0479">Metal-binding</keyword>
<keyword id="KW-0915">Sodium</keyword>
<keyword id="KW-0812">Transmembrane</keyword>
<keyword id="KW-1133">Transmembrane helix</keyword>
<keyword id="KW-0813">Transport</keyword>
<evidence type="ECO:0000255" key="1">
    <source>
        <dbReference type="HAMAP-Rule" id="MF_00454"/>
    </source>
</evidence>
<sequence>MGEILLLAAGGALGAVSRYGLNNLTVKLLGDSFPYGTLIVNCLGCFVLGFLMQWGFSSDSHNTHLKLMLTAGFLGAFTTFSTFSYETLDCFKNGDYFNGFSNILANVLLGLLMVFIGAYLGSLLKQNSGT</sequence>
<feature type="chain" id="PRO_0000252874" description="Fluoride-specific ion channel FluC">
    <location>
        <begin position="1"/>
        <end position="130"/>
    </location>
</feature>
<feature type="transmembrane region" description="Helical" evidence="1">
    <location>
        <begin position="1"/>
        <end position="21"/>
    </location>
</feature>
<feature type="transmembrane region" description="Helical" evidence="1">
    <location>
        <begin position="36"/>
        <end position="56"/>
    </location>
</feature>
<feature type="transmembrane region" description="Helical" evidence="1">
    <location>
        <begin position="65"/>
        <end position="85"/>
    </location>
</feature>
<feature type="transmembrane region" description="Helical" evidence="1">
    <location>
        <begin position="103"/>
        <end position="123"/>
    </location>
</feature>
<feature type="binding site" evidence="1">
    <location>
        <position position="75"/>
    </location>
    <ligand>
        <name>Na(+)</name>
        <dbReference type="ChEBI" id="CHEBI:29101"/>
        <note>structural</note>
    </ligand>
</feature>
<feature type="binding site" evidence="1">
    <location>
        <position position="78"/>
    </location>
    <ligand>
        <name>Na(+)</name>
        <dbReference type="ChEBI" id="CHEBI:29101"/>
        <note>structural</note>
    </ligand>
</feature>
<reference key="1">
    <citation type="journal article" date="2005" name="Nat. Biotechnol.">
        <title>Genome sequence of the chlorinated compound-respiring bacterium Dehalococcoides species strain CBDB1.</title>
        <authorList>
            <person name="Kube M."/>
            <person name="Beck A."/>
            <person name="Zinder S.H."/>
            <person name="Kuhl H."/>
            <person name="Reinhardt R."/>
            <person name="Adrian L."/>
        </authorList>
    </citation>
    <scope>NUCLEOTIDE SEQUENCE [LARGE SCALE GENOMIC DNA]</scope>
    <source>
        <strain>CBDB1</strain>
    </source>
</reference>
<dbReference type="EMBL" id="AJ965256">
    <property type="protein sequence ID" value="CAI83493.1"/>
    <property type="molecule type" value="Genomic_DNA"/>
</dbReference>
<dbReference type="RefSeq" id="WP_010937175.1">
    <property type="nucleotide sequence ID" value="NC_007356.1"/>
</dbReference>
<dbReference type="SMR" id="Q3ZZ39"/>
<dbReference type="GeneID" id="3229265"/>
<dbReference type="KEGG" id="deh:cbdbA1469"/>
<dbReference type="HOGENOM" id="CLU_114342_3_0_0"/>
<dbReference type="Proteomes" id="UP000000433">
    <property type="component" value="Chromosome"/>
</dbReference>
<dbReference type="GO" id="GO:0005886">
    <property type="term" value="C:plasma membrane"/>
    <property type="evidence" value="ECO:0007669"/>
    <property type="project" value="UniProtKB-SubCell"/>
</dbReference>
<dbReference type="GO" id="GO:0062054">
    <property type="term" value="F:fluoride channel activity"/>
    <property type="evidence" value="ECO:0007669"/>
    <property type="project" value="UniProtKB-UniRule"/>
</dbReference>
<dbReference type="GO" id="GO:0046872">
    <property type="term" value="F:metal ion binding"/>
    <property type="evidence" value="ECO:0007669"/>
    <property type="project" value="UniProtKB-KW"/>
</dbReference>
<dbReference type="GO" id="GO:0140114">
    <property type="term" value="P:cellular detoxification of fluoride"/>
    <property type="evidence" value="ECO:0007669"/>
    <property type="project" value="UniProtKB-UniRule"/>
</dbReference>
<dbReference type="HAMAP" id="MF_00454">
    <property type="entry name" value="FluC"/>
    <property type="match status" value="1"/>
</dbReference>
<dbReference type="InterPro" id="IPR003691">
    <property type="entry name" value="FluC"/>
</dbReference>
<dbReference type="NCBIfam" id="TIGR00494">
    <property type="entry name" value="crcB"/>
    <property type="match status" value="1"/>
</dbReference>
<dbReference type="PANTHER" id="PTHR28259">
    <property type="entry name" value="FLUORIDE EXPORT PROTEIN 1-RELATED"/>
    <property type="match status" value="1"/>
</dbReference>
<dbReference type="PANTHER" id="PTHR28259:SF1">
    <property type="entry name" value="FLUORIDE EXPORT PROTEIN 1-RELATED"/>
    <property type="match status" value="1"/>
</dbReference>
<dbReference type="Pfam" id="PF02537">
    <property type="entry name" value="CRCB"/>
    <property type="match status" value="1"/>
</dbReference>
<gene>
    <name evidence="1" type="primary">fluC</name>
    <name evidence="1" type="synonym">crcB</name>
    <name type="ordered locus">cbdbA1469</name>
</gene>